<reference key="1">
    <citation type="journal article" date="2024" name="Chem. Sci.">
        <title>Discovery and heterologous biosynthesis of glycosylated polyketide luteodienoside A reveals unprecedented glucinol-mediated product offloading by a fungal carnitine O-acyltransferase domain.</title>
        <authorList>
            <person name="Arishi A.A."/>
            <person name="Shang Z."/>
            <person name="Lacey E."/>
            <person name="Crombie A."/>
            <person name="Vuong D."/>
            <person name="Li H."/>
            <person name="Bracegirdle J."/>
            <person name="Turner P."/>
            <person name="Lewis W."/>
            <person name="Flematti G.R."/>
            <person name="Piggott A.M."/>
            <person name="Chooi Y.H."/>
        </authorList>
    </citation>
    <scope>NUCLEOTIDE SEQUENCE [GENOMIC DNA]</scope>
    <scope>FUNCTION</scope>
    <source>
        <strain>CBS 146723 / FRR 5427 / MST FP 2246</strain>
    </source>
</reference>
<organism>
    <name type="scientific">Aspergillus luteorubrus</name>
    <dbReference type="NCBI Taxonomy" id="2715282"/>
    <lineage>
        <taxon>Eukaryota</taxon>
        <taxon>Fungi</taxon>
        <taxon>Dikarya</taxon>
        <taxon>Ascomycota</taxon>
        <taxon>Pezizomycotina</taxon>
        <taxon>Eurotiomycetes</taxon>
        <taxon>Eurotiomycetidae</taxon>
        <taxon>Eurotiales</taxon>
        <taxon>Aspergillaceae</taxon>
        <taxon>Aspergillus</taxon>
    </lineage>
</organism>
<gene>
    <name evidence="4" type="primary">ltbC</name>
</gene>
<dbReference type="EC" id="2.1.1.-" evidence="3"/>
<dbReference type="EMBL" id="OR597289">
    <property type="protein sequence ID" value="WWQ80775.1"/>
    <property type="molecule type" value="Genomic_DNA"/>
</dbReference>
<dbReference type="SMR" id="P9WEH7"/>
<dbReference type="GO" id="GO:0008168">
    <property type="term" value="F:methyltransferase activity"/>
    <property type="evidence" value="ECO:0007669"/>
    <property type="project" value="UniProtKB-KW"/>
</dbReference>
<dbReference type="GO" id="GO:0032259">
    <property type="term" value="P:methylation"/>
    <property type="evidence" value="ECO:0007669"/>
    <property type="project" value="UniProtKB-KW"/>
</dbReference>
<dbReference type="CDD" id="cd02440">
    <property type="entry name" value="AdoMet_MTases"/>
    <property type="match status" value="1"/>
</dbReference>
<dbReference type="Gene3D" id="3.40.50.150">
    <property type="entry name" value="Vaccinia Virus protein VP39"/>
    <property type="match status" value="1"/>
</dbReference>
<dbReference type="InterPro" id="IPR041698">
    <property type="entry name" value="Methyltransf_25"/>
</dbReference>
<dbReference type="InterPro" id="IPR029063">
    <property type="entry name" value="SAM-dependent_MTases_sf"/>
</dbReference>
<dbReference type="PANTHER" id="PTHR43591:SF24">
    <property type="entry name" value="2-METHOXY-6-POLYPRENYL-1,4-BENZOQUINOL METHYLASE, MITOCHONDRIAL"/>
    <property type="match status" value="1"/>
</dbReference>
<dbReference type="PANTHER" id="PTHR43591">
    <property type="entry name" value="METHYLTRANSFERASE"/>
    <property type="match status" value="1"/>
</dbReference>
<dbReference type="Pfam" id="PF13649">
    <property type="entry name" value="Methyltransf_25"/>
    <property type="match status" value="1"/>
</dbReference>
<dbReference type="SUPFAM" id="SSF53335">
    <property type="entry name" value="S-adenosyl-L-methionine-dependent methyltransferases"/>
    <property type="match status" value="1"/>
</dbReference>
<feature type="chain" id="PRO_0000461480" description="Probable methyltransferase ltbC">
    <location>
        <begin position="1"/>
        <end position="285"/>
    </location>
</feature>
<feature type="region of interest" description="Disordered" evidence="2">
    <location>
        <begin position="1"/>
        <end position="22"/>
    </location>
</feature>
<comment type="function">
    <text evidence="3">Probable methyltransferase; part of the gene cluster that mediates the biosynthesis of luteodienoside A, a glycosylated polyketide consisting of an unusual 1-O-beta-D-glucopyranosyl-myo-inositol (glucinol) ester of 3-hydroxy-2,2,4-trimethylocta-4,6-dienoic acid (PubMed:38425541). The HR-PKS ltbA produces the trimethylated polyketide chain from acetyl-CoA, malonyl-CoA and S-adenosylmethionine (SAM), and the ltbA cAT domain then uses glucinol produced by the glycosyltransferase ltbB as an offloading substrate to release luteodienoside A (PubMed:38425541). Since ltbA and ltbB are sufficient for the biosynthesis of luteodienoside A, the functions of the methyltransferase ltbC and the FAD-binding monooxygenase ltbD within the pathway remain obscur (PubMed:38425541).</text>
</comment>
<comment type="subunit">
    <text evidence="1">Monomer.</text>
</comment>
<comment type="similarity">
    <text evidence="5">Belongs to the class I-like SAM-binding methyltransferase superfamily.</text>
</comment>
<sequence>MASTGQTNNYKQGYSSQTVETQQTRRAESEAAFLLPYIKKTDYILDVGCGPGTITVGFVKYASEGRTIGIDISANVLGRAKAAADEASIPKEGPGSIIFEEGNILEGLAYPDNTFDIVFCAHTLGYMPPPDMPLKALTEMRRVLKPGGILATRDTIEQHFYPRSMDLDRLWVGHFRRAVLKGDPEAEDLSPPFMPALFRRAGFDADGGKVHISTGSTVFSGATTRQWLANRAESQLQPGDPLRRSWLEAGITEDEIHETLLASKKWAETEDAWYAALHCDMLAWK</sequence>
<protein>
    <recommendedName>
        <fullName evidence="4">Probable methyltransferase ltbC</fullName>
        <ecNumber evidence="3">2.1.1.-</ecNumber>
    </recommendedName>
    <alternativeName>
        <fullName evidence="4">Luteodienoside A biosynthesis cluster protein C</fullName>
    </alternativeName>
</protein>
<evidence type="ECO:0000250" key="1">
    <source>
        <dbReference type="UniProtKB" id="Q8KZ94"/>
    </source>
</evidence>
<evidence type="ECO:0000256" key="2">
    <source>
        <dbReference type="SAM" id="MobiDB-lite"/>
    </source>
</evidence>
<evidence type="ECO:0000269" key="3">
    <source>
    </source>
</evidence>
<evidence type="ECO:0000303" key="4">
    <source>
    </source>
</evidence>
<evidence type="ECO:0000305" key="5"/>
<name>LTBC_ASPLT</name>
<accession>P9WEH7</accession>
<proteinExistence type="inferred from homology"/>
<keyword id="KW-0489">Methyltransferase</keyword>
<keyword id="KW-0808">Transferase</keyword>